<gene>
    <name evidence="1" type="primary">deoC</name>
    <name type="ordered locus">ECED1_5252</name>
</gene>
<feature type="chain" id="PRO_1000146963" description="Deoxyribose-phosphate aldolase">
    <location>
        <begin position="1"/>
        <end position="259"/>
    </location>
</feature>
<feature type="active site" description="Proton donor/acceptor" evidence="1">
    <location>
        <position position="102"/>
    </location>
</feature>
<feature type="active site" description="Schiff-base intermediate with acetaldehyde" evidence="1">
    <location>
        <position position="167"/>
    </location>
</feature>
<feature type="active site" description="Proton donor/acceptor" evidence="1">
    <location>
        <position position="201"/>
    </location>
</feature>
<name>DEOC_ECO81</name>
<evidence type="ECO:0000255" key="1">
    <source>
        <dbReference type="HAMAP-Rule" id="MF_00592"/>
    </source>
</evidence>
<accession>B7N2V7</accession>
<sequence length="259" mass="27748">MTDLKASSLRALKLMDLTTLNDDDTDEKVIALCHQAKTPVGNTAAICIYPRFIPIARKTLKEQGTPEIRIATVTNFPHGNDDIEIALAETRAAIAYGADEVDVVFPYRALMAGNEQVGFDLVKACKEACAAANVLLKVIIETGELKDEALIRKASEISIKAGADFIKTSTGKVAVNATPESARIMMEVIRDMGVEKTVGFKPAGGVRTAEDAQKYLAIADELFGADWADARHYRFGASSLLASLLKALGHGDGKSASSY</sequence>
<comment type="function">
    <text evidence="1">Catalyzes a reversible aldol reaction between acetaldehyde and D-glyceraldehyde 3-phosphate to generate 2-deoxy-D-ribose 5-phosphate.</text>
</comment>
<comment type="catalytic activity">
    <reaction evidence="1">
        <text>2-deoxy-D-ribose 5-phosphate = D-glyceraldehyde 3-phosphate + acetaldehyde</text>
        <dbReference type="Rhea" id="RHEA:12821"/>
        <dbReference type="ChEBI" id="CHEBI:15343"/>
        <dbReference type="ChEBI" id="CHEBI:59776"/>
        <dbReference type="ChEBI" id="CHEBI:62877"/>
        <dbReference type="EC" id="4.1.2.4"/>
    </reaction>
</comment>
<comment type="pathway">
    <text evidence="1">Carbohydrate degradation; 2-deoxy-D-ribose 1-phosphate degradation; D-glyceraldehyde 3-phosphate and acetaldehyde from 2-deoxy-alpha-D-ribose 1-phosphate: step 2/2.</text>
</comment>
<comment type="subcellular location">
    <subcellularLocation>
        <location evidence="1">Cytoplasm</location>
    </subcellularLocation>
</comment>
<comment type="similarity">
    <text evidence="1">Belongs to the DeoC/FbaB aldolase family. DeoC type 2 subfamily.</text>
</comment>
<organism>
    <name type="scientific">Escherichia coli O81 (strain ED1a)</name>
    <dbReference type="NCBI Taxonomy" id="585397"/>
    <lineage>
        <taxon>Bacteria</taxon>
        <taxon>Pseudomonadati</taxon>
        <taxon>Pseudomonadota</taxon>
        <taxon>Gammaproteobacteria</taxon>
        <taxon>Enterobacterales</taxon>
        <taxon>Enterobacteriaceae</taxon>
        <taxon>Escherichia</taxon>
    </lineage>
</organism>
<reference key="1">
    <citation type="journal article" date="2009" name="PLoS Genet.">
        <title>Organised genome dynamics in the Escherichia coli species results in highly diverse adaptive paths.</title>
        <authorList>
            <person name="Touchon M."/>
            <person name="Hoede C."/>
            <person name="Tenaillon O."/>
            <person name="Barbe V."/>
            <person name="Baeriswyl S."/>
            <person name="Bidet P."/>
            <person name="Bingen E."/>
            <person name="Bonacorsi S."/>
            <person name="Bouchier C."/>
            <person name="Bouvet O."/>
            <person name="Calteau A."/>
            <person name="Chiapello H."/>
            <person name="Clermont O."/>
            <person name="Cruveiller S."/>
            <person name="Danchin A."/>
            <person name="Diard M."/>
            <person name="Dossat C."/>
            <person name="Karoui M.E."/>
            <person name="Frapy E."/>
            <person name="Garry L."/>
            <person name="Ghigo J.M."/>
            <person name="Gilles A.M."/>
            <person name="Johnson J."/>
            <person name="Le Bouguenec C."/>
            <person name="Lescat M."/>
            <person name="Mangenot S."/>
            <person name="Martinez-Jehanne V."/>
            <person name="Matic I."/>
            <person name="Nassif X."/>
            <person name="Oztas S."/>
            <person name="Petit M.A."/>
            <person name="Pichon C."/>
            <person name="Rouy Z."/>
            <person name="Ruf C.S."/>
            <person name="Schneider D."/>
            <person name="Tourret J."/>
            <person name="Vacherie B."/>
            <person name="Vallenet D."/>
            <person name="Medigue C."/>
            <person name="Rocha E.P.C."/>
            <person name="Denamur E."/>
        </authorList>
    </citation>
    <scope>NUCLEOTIDE SEQUENCE [LARGE SCALE GENOMIC DNA]</scope>
    <source>
        <strain>ED1a</strain>
    </source>
</reference>
<keyword id="KW-0963">Cytoplasm</keyword>
<keyword id="KW-0456">Lyase</keyword>
<keyword id="KW-0704">Schiff base</keyword>
<protein>
    <recommendedName>
        <fullName evidence="1">Deoxyribose-phosphate aldolase</fullName>
        <shortName evidence="1">DERA</shortName>
        <ecNumber evidence="1">4.1.2.4</ecNumber>
    </recommendedName>
    <alternativeName>
        <fullName evidence="1">2-deoxy-D-ribose 5-phosphate aldolase</fullName>
    </alternativeName>
    <alternativeName>
        <fullName evidence="1">Phosphodeoxyriboaldolase</fullName>
        <shortName evidence="1">Deoxyriboaldolase</shortName>
    </alternativeName>
</protein>
<dbReference type="EC" id="4.1.2.4" evidence="1"/>
<dbReference type="EMBL" id="CU928162">
    <property type="protein sequence ID" value="CAV18211.1"/>
    <property type="molecule type" value="Genomic_DNA"/>
</dbReference>
<dbReference type="RefSeq" id="WP_001295412.1">
    <property type="nucleotide sequence ID" value="NC_011745.1"/>
</dbReference>
<dbReference type="SMR" id="B7N2V7"/>
<dbReference type="GeneID" id="93777463"/>
<dbReference type="KEGG" id="ecq:ECED1_5252"/>
<dbReference type="HOGENOM" id="CLU_053595_3_1_6"/>
<dbReference type="UniPathway" id="UPA00002">
    <property type="reaction ID" value="UER00468"/>
</dbReference>
<dbReference type="Proteomes" id="UP000000748">
    <property type="component" value="Chromosome"/>
</dbReference>
<dbReference type="GO" id="GO:0005737">
    <property type="term" value="C:cytoplasm"/>
    <property type="evidence" value="ECO:0007669"/>
    <property type="project" value="UniProtKB-SubCell"/>
</dbReference>
<dbReference type="GO" id="GO:0004139">
    <property type="term" value="F:deoxyribose-phosphate aldolase activity"/>
    <property type="evidence" value="ECO:0007669"/>
    <property type="project" value="UniProtKB-UniRule"/>
</dbReference>
<dbReference type="GO" id="GO:0006018">
    <property type="term" value="P:2-deoxyribose 1-phosphate catabolic process"/>
    <property type="evidence" value="ECO:0007669"/>
    <property type="project" value="UniProtKB-UniRule"/>
</dbReference>
<dbReference type="GO" id="GO:0016052">
    <property type="term" value="P:carbohydrate catabolic process"/>
    <property type="evidence" value="ECO:0007669"/>
    <property type="project" value="TreeGrafter"/>
</dbReference>
<dbReference type="GO" id="GO:0009264">
    <property type="term" value="P:deoxyribonucleotide catabolic process"/>
    <property type="evidence" value="ECO:0007669"/>
    <property type="project" value="InterPro"/>
</dbReference>
<dbReference type="CDD" id="cd00959">
    <property type="entry name" value="DeoC"/>
    <property type="match status" value="1"/>
</dbReference>
<dbReference type="FunFam" id="3.20.20.70:FF:000034">
    <property type="entry name" value="Deoxyribose-phosphate aldolase"/>
    <property type="match status" value="1"/>
</dbReference>
<dbReference type="Gene3D" id="3.20.20.70">
    <property type="entry name" value="Aldolase class I"/>
    <property type="match status" value="1"/>
</dbReference>
<dbReference type="HAMAP" id="MF_00592">
    <property type="entry name" value="DeoC_type2"/>
    <property type="match status" value="1"/>
</dbReference>
<dbReference type="InterPro" id="IPR013785">
    <property type="entry name" value="Aldolase_TIM"/>
</dbReference>
<dbReference type="InterPro" id="IPR011343">
    <property type="entry name" value="DeoC"/>
</dbReference>
<dbReference type="InterPro" id="IPR002915">
    <property type="entry name" value="DeoC/FbaB/LacD_aldolase"/>
</dbReference>
<dbReference type="InterPro" id="IPR023649">
    <property type="entry name" value="DeoC_typeII"/>
</dbReference>
<dbReference type="NCBIfam" id="TIGR00126">
    <property type="entry name" value="deoC"/>
    <property type="match status" value="1"/>
</dbReference>
<dbReference type="PANTHER" id="PTHR10889">
    <property type="entry name" value="DEOXYRIBOSE-PHOSPHATE ALDOLASE"/>
    <property type="match status" value="1"/>
</dbReference>
<dbReference type="PANTHER" id="PTHR10889:SF3">
    <property type="entry name" value="DEOXYRIBOSE-PHOSPHATE ALDOLASE"/>
    <property type="match status" value="1"/>
</dbReference>
<dbReference type="Pfam" id="PF01791">
    <property type="entry name" value="DeoC"/>
    <property type="match status" value="1"/>
</dbReference>
<dbReference type="PIRSF" id="PIRSF001357">
    <property type="entry name" value="DeoC"/>
    <property type="match status" value="1"/>
</dbReference>
<dbReference type="SMART" id="SM01133">
    <property type="entry name" value="DeoC"/>
    <property type="match status" value="1"/>
</dbReference>
<dbReference type="SUPFAM" id="SSF51569">
    <property type="entry name" value="Aldolase"/>
    <property type="match status" value="1"/>
</dbReference>
<proteinExistence type="inferred from homology"/>